<protein>
    <recommendedName>
        <fullName>CTP-dependent diacylglycerol kinase 1</fullName>
        <ecNumber evidence="1">2.7.1.174</ecNumber>
    </recommendedName>
    <alternativeName>
        <fullName>Diglyceride kinase 1</fullName>
        <shortName>DAG kinase 1</shortName>
    </alternativeName>
</protein>
<evidence type="ECO:0000250" key="1">
    <source>
        <dbReference type="UniProtKB" id="Q12382"/>
    </source>
</evidence>
<evidence type="ECO:0000255" key="2"/>
<evidence type="ECO:0000256" key="3">
    <source>
        <dbReference type="SAM" id="MobiDB-lite"/>
    </source>
</evidence>
<evidence type="ECO:0000305" key="4"/>
<feature type="chain" id="PRO_0000240381" description="CTP-dependent diacylglycerol kinase 1">
    <location>
        <begin position="1"/>
        <end position="317"/>
    </location>
</feature>
<feature type="topological domain" description="Lumenal" evidence="1">
    <location>
        <begin position="1"/>
        <end position="130"/>
    </location>
</feature>
<feature type="transmembrane region" description="Helical" evidence="2">
    <location>
        <begin position="131"/>
        <end position="151"/>
    </location>
</feature>
<feature type="topological domain" description="Cytoplasmic" evidence="1">
    <location>
        <begin position="152"/>
        <end position="167"/>
    </location>
</feature>
<feature type="transmembrane region" description="Helical" evidence="2">
    <location>
        <begin position="168"/>
        <end position="188"/>
    </location>
</feature>
<feature type="topological domain" description="Lumenal" evidence="1">
    <location>
        <begin position="189"/>
        <end position="190"/>
    </location>
</feature>
<feature type="transmembrane region" description="Helical" evidence="2">
    <location>
        <begin position="191"/>
        <end position="211"/>
    </location>
</feature>
<feature type="topological domain" description="Cytoplasmic" evidence="1">
    <location>
        <begin position="212"/>
        <end position="230"/>
    </location>
</feature>
<feature type="transmembrane region" description="Helical" evidence="2">
    <location>
        <begin position="231"/>
        <end position="251"/>
    </location>
</feature>
<feature type="topological domain" description="Lumenal" evidence="1">
    <location>
        <begin position="252"/>
        <end position="271"/>
    </location>
</feature>
<feature type="transmembrane region" description="Helical" evidence="2">
    <location>
        <begin position="272"/>
        <end position="292"/>
    </location>
</feature>
<feature type="topological domain" description="Cytoplasmic" evidence="1">
    <location>
        <position position="293"/>
    </location>
</feature>
<feature type="transmembrane region" description="Helical" evidence="2">
    <location>
        <begin position="294"/>
        <end position="314"/>
    </location>
</feature>
<feature type="topological domain" description="Lumenal" evidence="1">
    <location>
        <begin position="315"/>
        <end position="317"/>
    </location>
</feature>
<feature type="region of interest" description="Disordered" evidence="3">
    <location>
        <begin position="1"/>
        <end position="44"/>
    </location>
</feature>
<feature type="compositionally biased region" description="Low complexity" evidence="3">
    <location>
        <begin position="23"/>
        <end position="38"/>
    </location>
</feature>
<reference key="1">
    <citation type="journal article" date="2004" name="Science">
        <title>The Ashbya gossypii genome as a tool for mapping the ancient Saccharomyces cerevisiae genome.</title>
        <authorList>
            <person name="Dietrich F.S."/>
            <person name="Voegeli S."/>
            <person name="Brachat S."/>
            <person name="Lerch A."/>
            <person name="Gates K."/>
            <person name="Steiner S."/>
            <person name="Mohr C."/>
            <person name="Poehlmann R."/>
            <person name="Luedi P."/>
            <person name="Choi S."/>
            <person name="Wing R.A."/>
            <person name="Flavier A."/>
            <person name="Gaffney T.D."/>
            <person name="Philippsen P."/>
        </authorList>
    </citation>
    <scope>NUCLEOTIDE SEQUENCE [LARGE SCALE GENOMIC DNA]</scope>
    <source>
        <strain>ATCC 10895 / CBS 109.51 / FGSC 9923 / NRRL Y-1056</strain>
    </source>
</reference>
<reference key="2">
    <citation type="journal article" date="2013" name="G3 (Bethesda)">
        <title>Genomes of Ashbya fungi isolated from insects reveal four mating-type loci, numerous translocations, lack of transposons, and distinct gene duplications.</title>
        <authorList>
            <person name="Dietrich F.S."/>
            <person name="Voegeli S."/>
            <person name="Kuo S."/>
            <person name="Philippsen P."/>
        </authorList>
    </citation>
    <scope>GENOME REANNOTATION</scope>
    <source>
        <strain>ATCC 10895 / CBS 109.51 / FGSC 9923 / NRRL Y-1056</strain>
    </source>
</reference>
<accession>Q753I3</accession>
<name>DGK1_EREGS</name>
<gene>
    <name type="primary">DGK1</name>
    <name type="synonym">HSD1</name>
    <name type="ordered locus">AFR329C</name>
</gene>
<sequence>MANEEELQTAESAFVTGARRYSNDYSESESSSKHSGCSTPVEGTPAEAATTIGARASGGSTTWQRLRQLLMERGSDVHLPVTEIHLKSQEWFGDFITKHEVPRKVFHSSIGFFTLALYVRDVDYRNVRLPLIVGFVHVLLLDVIRLHWPAFNTLYCQVTGLLMRKKEVHTYNGVLWYLLGLIFAFSFFSKDVALVSLFLLSWCDTAASTVGRLYGHLTPRISRNKSLAGSLAAFVVGVISCAVFYGYFVPAYSHVNHPGEIMWNPETSRLSLVQLSLLGGFVASLSEGIDLFNWDDNFTIPVLSAIFMHTIIAFSQR</sequence>
<comment type="function">
    <text evidence="1">CTP-dependent diacylglycerol kinase that catalyzes the phosphorylation of diacylglycerol (DAG) to phosphatidate (PA). Controls phosphatidate levels at the nuclear envelope. May be involved in vesicle trafficking between the endoplasmic reticulum and the Golgi apparatus.</text>
</comment>
<comment type="catalytic activity">
    <reaction evidence="1">
        <text>a 1,2-diacyl-sn-glycerol + CTP = a 1,2-diacyl-sn-glycero-3-phosphate + CDP + H(+)</text>
        <dbReference type="Rhea" id="RHEA:25948"/>
        <dbReference type="ChEBI" id="CHEBI:15378"/>
        <dbReference type="ChEBI" id="CHEBI:17815"/>
        <dbReference type="ChEBI" id="CHEBI:37563"/>
        <dbReference type="ChEBI" id="CHEBI:58069"/>
        <dbReference type="ChEBI" id="CHEBI:58608"/>
        <dbReference type="EC" id="2.7.1.174"/>
    </reaction>
</comment>
<comment type="cofactor">
    <cofactor evidence="1">
        <name>Ca(2+)</name>
        <dbReference type="ChEBI" id="CHEBI:29108"/>
    </cofactor>
    <cofactor evidence="1">
        <name>Mg(2+)</name>
        <dbReference type="ChEBI" id="CHEBI:18420"/>
    </cofactor>
</comment>
<comment type="subcellular location">
    <subcellularLocation>
        <location evidence="1">Endoplasmic reticulum membrane</location>
        <topology evidence="1">Multi-pass membrane protein</topology>
    </subcellularLocation>
    <subcellularLocation>
        <location evidence="1">Nucleus membrane</location>
        <topology evidence="1">Multi-pass membrane protein</topology>
    </subcellularLocation>
</comment>
<comment type="similarity">
    <text evidence="4">Belongs to the DGK1 family.</text>
</comment>
<proteinExistence type="inferred from homology"/>
<dbReference type="EC" id="2.7.1.174" evidence="1"/>
<dbReference type="EMBL" id="AE016819">
    <property type="protein sequence ID" value="AAS53700.1"/>
    <property type="molecule type" value="Genomic_DNA"/>
</dbReference>
<dbReference type="RefSeq" id="NP_985876.1">
    <property type="nucleotide sequence ID" value="NM_211231.1"/>
</dbReference>
<dbReference type="FunCoup" id="Q753I3">
    <property type="interactions" value="61"/>
</dbReference>
<dbReference type="STRING" id="284811.Q753I3"/>
<dbReference type="EnsemblFungi" id="AAS53700">
    <property type="protein sequence ID" value="AAS53700"/>
    <property type="gene ID" value="AGOS_AFR329C"/>
</dbReference>
<dbReference type="GeneID" id="4622141"/>
<dbReference type="KEGG" id="ago:AGOS_AFR329C"/>
<dbReference type="eggNOG" id="KOG4453">
    <property type="taxonomic scope" value="Eukaryota"/>
</dbReference>
<dbReference type="HOGENOM" id="CLU_031477_0_1_1"/>
<dbReference type="InParanoid" id="Q753I3"/>
<dbReference type="OMA" id="TKHEVPR"/>
<dbReference type="OrthoDB" id="5673at2759"/>
<dbReference type="Proteomes" id="UP000000591">
    <property type="component" value="Chromosome VI"/>
</dbReference>
<dbReference type="GO" id="GO:0005789">
    <property type="term" value="C:endoplasmic reticulum membrane"/>
    <property type="evidence" value="ECO:0000318"/>
    <property type="project" value="GO_Central"/>
</dbReference>
<dbReference type="GO" id="GO:0031965">
    <property type="term" value="C:nuclear membrane"/>
    <property type="evidence" value="ECO:0007669"/>
    <property type="project" value="UniProtKB-SubCell"/>
</dbReference>
<dbReference type="GO" id="GO:0004143">
    <property type="term" value="F:ATP-dependent diacylglycerol kinase activity"/>
    <property type="evidence" value="ECO:0007669"/>
    <property type="project" value="InterPro"/>
</dbReference>
<dbReference type="GO" id="GO:0141035">
    <property type="term" value="F:CTP-dependent diacylglycerol kinase activity"/>
    <property type="evidence" value="ECO:0007669"/>
    <property type="project" value="UniProtKB-EC"/>
</dbReference>
<dbReference type="GO" id="GO:0001727">
    <property type="term" value="F:lipid kinase activity"/>
    <property type="evidence" value="ECO:0000318"/>
    <property type="project" value="GO_Central"/>
</dbReference>
<dbReference type="GO" id="GO:0006654">
    <property type="term" value="P:phosphatidic acid biosynthetic process"/>
    <property type="evidence" value="ECO:0000318"/>
    <property type="project" value="GO_Central"/>
</dbReference>
<dbReference type="GO" id="GO:0016192">
    <property type="term" value="P:vesicle-mediated transport"/>
    <property type="evidence" value="ECO:0007669"/>
    <property type="project" value="UniProtKB-KW"/>
</dbReference>
<dbReference type="InterPro" id="IPR037997">
    <property type="entry name" value="Dgk1-like"/>
</dbReference>
<dbReference type="PANTHER" id="PTHR31303">
    <property type="entry name" value="CTP-DEPENDENT DIACYLGLYCEROL KINASE 1"/>
    <property type="match status" value="1"/>
</dbReference>
<dbReference type="PANTHER" id="PTHR31303:SF1">
    <property type="entry name" value="CTP-DEPENDENT DIACYLGLYCEROL KINASE 1"/>
    <property type="match status" value="1"/>
</dbReference>
<dbReference type="Pfam" id="PF01148">
    <property type="entry name" value="CTP_transf_1"/>
    <property type="match status" value="1"/>
</dbReference>
<keyword id="KW-0106">Calcium</keyword>
<keyword id="KW-0256">Endoplasmic reticulum</keyword>
<keyword id="KW-0931">ER-Golgi transport</keyword>
<keyword id="KW-0418">Kinase</keyword>
<keyword id="KW-0460">Magnesium</keyword>
<keyword id="KW-0472">Membrane</keyword>
<keyword id="KW-0539">Nucleus</keyword>
<keyword id="KW-1185">Reference proteome</keyword>
<keyword id="KW-0808">Transferase</keyword>
<keyword id="KW-0812">Transmembrane</keyword>
<keyword id="KW-1133">Transmembrane helix</keyword>
<keyword id="KW-0813">Transport</keyword>
<organism>
    <name type="scientific">Eremothecium gossypii (strain ATCC 10895 / CBS 109.51 / FGSC 9923 / NRRL Y-1056)</name>
    <name type="common">Yeast</name>
    <name type="synonym">Ashbya gossypii</name>
    <dbReference type="NCBI Taxonomy" id="284811"/>
    <lineage>
        <taxon>Eukaryota</taxon>
        <taxon>Fungi</taxon>
        <taxon>Dikarya</taxon>
        <taxon>Ascomycota</taxon>
        <taxon>Saccharomycotina</taxon>
        <taxon>Saccharomycetes</taxon>
        <taxon>Saccharomycetales</taxon>
        <taxon>Saccharomycetaceae</taxon>
        <taxon>Eremothecium</taxon>
    </lineage>
</organism>